<dbReference type="EC" id="1.3.1.98" evidence="1"/>
<dbReference type="EMBL" id="CR626927">
    <property type="protein sequence ID" value="CAH08555.1"/>
    <property type="molecule type" value="Genomic_DNA"/>
</dbReference>
<dbReference type="RefSeq" id="WP_010993160.1">
    <property type="nucleotide sequence ID" value="NC_003228.3"/>
</dbReference>
<dbReference type="SMR" id="Q5LBG5"/>
<dbReference type="PaxDb" id="272559-BF9343_2774"/>
<dbReference type="GeneID" id="60365901"/>
<dbReference type="KEGG" id="bfs:BF9343_2774"/>
<dbReference type="eggNOG" id="COG0812">
    <property type="taxonomic scope" value="Bacteria"/>
</dbReference>
<dbReference type="HOGENOM" id="CLU_035304_0_0_10"/>
<dbReference type="UniPathway" id="UPA00219"/>
<dbReference type="Proteomes" id="UP000006731">
    <property type="component" value="Chromosome"/>
</dbReference>
<dbReference type="GO" id="GO:0005829">
    <property type="term" value="C:cytosol"/>
    <property type="evidence" value="ECO:0007669"/>
    <property type="project" value="TreeGrafter"/>
</dbReference>
<dbReference type="GO" id="GO:0071949">
    <property type="term" value="F:FAD binding"/>
    <property type="evidence" value="ECO:0007669"/>
    <property type="project" value="InterPro"/>
</dbReference>
<dbReference type="GO" id="GO:0008762">
    <property type="term" value="F:UDP-N-acetylmuramate dehydrogenase activity"/>
    <property type="evidence" value="ECO:0007669"/>
    <property type="project" value="UniProtKB-UniRule"/>
</dbReference>
<dbReference type="GO" id="GO:0051301">
    <property type="term" value="P:cell division"/>
    <property type="evidence" value="ECO:0007669"/>
    <property type="project" value="UniProtKB-KW"/>
</dbReference>
<dbReference type="GO" id="GO:0071555">
    <property type="term" value="P:cell wall organization"/>
    <property type="evidence" value="ECO:0007669"/>
    <property type="project" value="UniProtKB-KW"/>
</dbReference>
<dbReference type="GO" id="GO:0009252">
    <property type="term" value="P:peptidoglycan biosynthetic process"/>
    <property type="evidence" value="ECO:0007669"/>
    <property type="project" value="UniProtKB-UniRule"/>
</dbReference>
<dbReference type="GO" id="GO:0008360">
    <property type="term" value="P:regulation of cell shape"/>
    <property type="evidence" value="ECO:0007669"/>
    <property type="project" value="UniProtKB-KW"/>
</dbReference>
<dbReference type="Gene3D" id="3.30.465.10">
    <property type="match status" value="1"/>
</dbReference>
<dbReference type="Gene3D" id="3.90.78.10">
    <property type="entry name" value="UDP-N-acetylenolpyruvoylglucosamine reductase, C-terminal domain"/>
    <property type="match status" value="1"/>
</dbReference>
<dbReference type="Gene3D" id="3.30.43.10">
    <property type="entry name" value="Uridine Diphospho-n-acetylenolpyruvylglucosamine Reductase, domain 2"/>
    <property type="match status" value="1"/>
</dbReference>
<dbReference type="HAMAP" id="MF_00037">
    <property type="entry name" value="MurB"/>
    <property type="match status" value="1"/>
</dbReference>
<dbReference type="InterPro" id="IPR016166">
    <property type="entry name" value="FAD-bd_PCMH"/>
</dbReference>
<dbReference type="InterPro" id="IPR036318">
    <property type="entry name" value="FAD-bd_PCMH-like_sf"/>
</dbReference>
<dbReference type="InterPro" id="IPR016167">
    <property type="entry name" value="FAD-bd_PCMH_sub1"/>
</dbReference>
<dbReference type="InterPro" id="IPR016169">
    <property type="entry name" value="FAD-bd_PCMH_sub2"/>
</dbReference>
<dbReference type="InterPro" id="IPR003170">
    <property type="entry name" value="MurB"/>
</dbReference>
<dbReference type="InterPro" id="IPR011601">
    <property type="entry name" value="MurB_C"/>
</dbReference>
<dbReference type="InterPro" id="IPR036635">
    <property type="entry name" value="MurB_C_sf"/>
</dbReference>
<dbReference type="InterPro" id="IPR006094">
    <property type="entry name" value="Oxid_FAD_bind_N"/>
</dbReference>
<dbReference type="NCBIfam" id="TIGR00179">
    <property type="entry name" value="murB"/>
    <property type="match status" value="1"/>
</dbReference>
<dbReference type="NCBIfam" id="NF000755">
    <property type="entry name" value="PRK00046.1"/>
    <property type="match status" value="1"/>
</dbReference>
<dbReference type="PANTHER" id="PTHR21071">
    <property type="entry name" value="UDP-N-ACETYLENOLPYRUVOYLGLUCOSAMINE REDUCTASE"/>
    <property type="match status" value="1"/>
</dbReference>
<dbReference type="PANTHER" id="PTHR21071:SF4">
    <property type="entry name" value="UDP-N-ACETYLENOLPYRUVOYLGLUCOSAMINE REDUCTASE"/>
    <property type="match status" value="1"/>
</dbReference>
<dbReference type="Pfam" id="PF01565">
    <property type="entry name" value="FAD_binding_4"/>
    <property type="match status" value="1"/>
</dbReference>
<dbReference type="Pfam" id="PF02873">
    <property type="entry name" value="MurB_C"/>
    <property type="match status" value="1"/>
</dbReference>
<dbReference type="SUPFAM" id="SSF56176">
    <property type="entry name" value="FAD-binding/transporter-associated domain-like"/>
    <property type="match status" value="1"/>
</dbReference>
<dbReference type="SUPFAM" id="SSF56194">
    <property type="entry name" value="Uridine diphospho-N-Acetylenolpyruvylglucosamine reductase, MurB, C-terminal domain"/>
    <property type="match status" value="1"/>
</dbReference>
<dbReference type="PROSITE" id="PS51387">
    <property type="entry name" value="FAD_PCMH"/>
    <property type="match status" value="1"/>
</dbReference>
<reference key="1">
    <citation type="journal article" date="2005" name="Science">
        <title>Extensive DNA inversions in the B. fragilis genome control variable gene expression.</title>
        <authorList>
            <person name="Cerdeno-Tarraga A.-M."/>
            <person name="Patrick S."/>
            <person name="Crossman L.C."/>
            <person name="Blakely G."/>
            <person name="Abratt V."/>
            <person name="Lennard N."/>
            <person name="Poxton I."/>
            <person name="Duerden B."/>
            <person name="Harris B."/>
            <person name="Quail M.A."/>
            <person name="Barron A."/>
            <person name="Clark L."/>
            <person name="Corton C."/>
            <person name="Doggett J."/>
            <person name="Holden M.T.G."/>
            <person name="Larke N."/>
            <person name="Line A."/>
            <person name="Lord A."/>
            <person name="Norbertczak H."/>
            <person name="Ormond D."/>
            <person name="Price C."/>
            <person name="Rabbinowitsch E."/>
            <person name="Woodward J."/>
            <person name="Barrell B.G."/>
            <person name="Parkhill J."/>
        </authorList>
    </citation>
    <scope>NUCLEOTIDE SEQUENCE [LARGE SCALE GENOMIC DNA]</scope>
    <source>
        <strain>ATCC 25285 / DSM 2151 / CCUG 4856 / JCM 11019 / LMG 10263 / NCTC 9343 / Onslow / VPI 2553 / EN-2</strain>
    </source>
</reference>
<evidence type="ECO:0000255" key="1">
    <source>
        <dbReference type="HAMAP-Rule" id="MF_00037"/>
    </source>
</evidence>
<accession>Q5LBG5</accession>
<organism>
    <name type="scientific">Bacteroides fragilis (strain ATCC 25285 / DSM 2151 / CCUG 4856 / JCM 11019 / LMG 10263 / NCTC 9343 / Onslow / VPI 2553 / EN-2)</name>
    <dbReference type="NCBI Taxonomy" id="272559"/>
    <lineage>
        <taxon>Bacteria</taxon>
        <taxon>Pseudomonadati</taxon>
        <taxon>Bacteroidota</taxon>
        <taxon>Bacteroidia</taxon>
        <taxon>Bacteroidales</taxon>
        <taxon>Bacteroidaceae</taxon>
        <taxon>Bacteroides</taxon>
    </lineage>
</organism>
<feature type="chain" id="PRO_0000224663" description="UDP-N-acetylenolpyruvoylglucosamine reductase">
    <location>
        <begin position="1"/>
        <end position="332"/>
    </location>
</feature>
<feature type="domain" description="FAD-binding PCMH-type" evidence="1">
    <location>
        <begin position="15"/>
        <end position="184"/>
    </location>
</feature>
<feature type="active site" evidence="1">
    <location>
        <position position="160"/>
    </location>
</feature>
<feature type="active site" description="Proton donor" evidence="1">
    <location>
        <position position="232"/>
    </location>
</feature>
<feature type="active site" evidence="1">
    <location>
        <position position="328"/>
    </location>
</feature>
<sequence>MEQKYSLLSHNTFGIDVSAACFLEYASVDELRGLIGSGRVTSPYLHIGGGSNLLFTKDYEGTILHSRIGGVEVVAETDDDIVVRVGAGVVWDDFVDYCVQRHWHGVENLSLIPGEVGASAVQNIGAYGVEVKDLIVRVETLNIEGKEHVYDVTECGYSYRDSIFKRPENKSVFVTYVSFRLSKREHYTLDYGTIRRELEKYPGVTLDVVRRVIIAIREEKLPDPRVMGNAGSFFMNPIVGREQFEALQAEYPQMPFYEIDTDRVKIPAGWMIDQCGWKGKALGPAAVHDKQALVLVNRGGAKGADVIALSDAVRASVRAKFGIDIHPEVNFI</sequence>
<proteinExistence type="inferred from homology"/>
<protein>
    <recommendedName>
        <fullName evidence="1">UDP-N-acetylenolpyruvoylglucosamine reductase</fullName>
        <ecNumber evidence="1">1.3.1.98</ecNumber>
    </recommendedName>
    <alternativeName>
        <fullName evidence="1">UDP-N-acetylmuramate dehydrogenase</fullName>
    </alternativeName>
</protein>
<comment type="function">
    <text evidence="1">Cell wall formation.</text>
</comment>
<comment type="catalytic activity">
    <reaction evidence="1">
        <text>UDP-N-acetyl-alpha-D-muramate + NADP(+) = UDP-N-acetyl-3-O-(1-carboxyvinyl)-alpha-D-glucosamine + NADPH + H(+)</text>
        <dbReference type="Rhea" id="RHEA:12248"/>
        <dbReference type="ChEBI" id="CHEBI:15378"/>
        <dbReference type="ChEBI" id="CHEBI:57783"/>
        <dbReference type="ChEBI" id="CHEBI:58349"/>
        <dbReference type="ChEBI" id="CHEBI:68483"/>
        <dbReference type="ChEBI" id="CHEBI:70757"/>
        <dbReference type="EC" id="1.3.1.98"/>
    </reaction>
</comment>
<comment type="cofactor">
    <cofactor evidence="1">
        <name>FAD</name>
        <dbReference type="ChEBI" id="CHEBI:57692"/>
    </cofactor>
</comment>
<comment type="pathway">
    <text evidence="1">Cell wall biogenesis; peptidoglycan biosynthesis.</text>
</comment>
<comment type="subcellular location">
    <subcellularLocation>
        <location evidence="1">Cytoplasm</location>
    </subcellularLocation>
</comment>
<comment type="similarity">
    <text evidence="1">Belongs to the MurB family.</text>
</comment>
<keyword id="KW-0131">Cell cycle</keyword>
<keyword id="KW-0132">Cell division</keyword>
<keyword id="KW-0133">Cell shape</keyword>
<keyword id="KW-0961">Cell wall biogenesis/degradation</keyword>
<keyword id="KW-0963">Cytoplasm</keyword>
<keyword id="KW-0274">FAD</keyword>
<keyword id="KW-0285">Flavoprotein</keyword>
<keyword id="KW-0521">NADP</keyword>
<keyword id="KW-0560">Oxidoreductase</keyword>
<keyword id="KW-0573">Peptidoglycan synthesis</keyword>
<gene>
    <name evidence="1" type="primary">murB</name>
    <name type="ordered locus">BF2861</name>
</gene>
<name>MURB_BACFN</name>